<dbReference type="EMBL" id="CP000580">
    <property type="protein sequence ID" value="ABN97853.1"/>
    <property type="molecule type" value="Genomic_DNA"/>
</dbReference>
<dbReference type="SMR" id="A3PY76"/>
<dbReference type="KEGG" id="mjl:Mjls_2066"/>
<dbReference type="HOGENOM" id="CLU_089475_0_0_11"/>
<dbReference type="BioCyc" id="MSP164757:G1G8C-2085-MONOMER"/>
<dbReference type="GO" id="GO:0005829">
    <property type="term" value="C:cytosol"/>
    <property type="evidence" value="ECO:0007669"/>
    <property type="project" value="TreeGrafter"/>
</dbReference>
<dbReference type="GO" id="GO:0043024">
    <property type="term" value="F:ribosomal small subunit binding"/>
    <property type="evidence" value="ECO:0007669"/>
    <property type="project" value="TreeGrafter"/>
</dbReference>
<dbReference type="GO" id="GO:0030490">
    <property type="term" value="P:maturation of SSU-rRNA"/>
    <property type="evidence" value="ECO:0007669"/>
    <property type="project" value="UniProtKB-UniRule"/>
</dbReference>
<dbReference type="FunFam" id="3.30.300.20:FF:000018">
    <property type="entry name" value="Ribosome-binding factor A"/>
    <property type="match status" value="1"/>
</dbReference>
<dbReference type="Gene3D" id="3.30.300.20">
    <property type="match status" value="1"/>
</dbReference>
<dbReference type="HAMAP" id="MF_00003">
    <property type="entry name" value="RbfA"/>
    <property type="match status" value="1"/>
</dbReference>
<dbReference type="InterPro" id="IPR015946">
    <property type="entry name" value="KH_dom-like_a/b"/>
</dbReference>
<dbReference type="InterPro" id="IPR000238">
    <property type="entry name" value="RbfA"/>
</dbReference>
<dbReference type="InterPro" id="IPR023799">
    <property type="entry name" value="RbfA_dom_sf"/>
</dbReference>
<dbReference type="InterPro" id="IPR020053">
    <property type="entry name" value="Ribosome-bd_factorA_CS"/>
</dbReference>
<dbReference type="NCBIfam" id="TIGR00082">
    <property type="entry name" value="rbfA"/>
    <property type="match status" value="1"/>
</dbReference>
<dbReference type="PANTHER" id="PTHR33515">
    <property type="entry name" value="RIBOSOME-BINDING FACTOR A, CHLOROPLASTIC-RELATED"/>
    <property type="match status" value="1"/>
</dbReference>
<dbReference type="PANTHER" id="PTHR33515:SF1">
    <property type="entry name" value="RIBOSOME-BINDING FACTOR A, CHLOROPLASTIC-RELATED"/>
    <property type="match status" value="1"/>
</dbReference>
<dbReference type="Pfam" id="PF02033">
    <property type="entry name" value="RBFA"/>
    <property type="match status" value="1"/>
</dbReference>
<dbReference type="SUPFAM" id="SSF89919">
    <property type="entry name" value="Ribosome-binding factor A, RbfA"/>
    <property type="match status" value="1"/>
</dbReference>
<dbReference type="PROSITE" id="PS01319">
    <property type="entry name" value="RBFA"/>
    <property type="match status" value="1"/>
</dbReference>
<keyword id="KW-0963">Cytoplasm</keyword>
<keyword id="KW-0690">Ribosome biogenesis</keyword>
<feature type="chain" id="PRO_1000000144" description="Ribosome-binding factor A">
    <location>
        <begin position="1"/>
        <end position="171"/>
    </location>
</feature>
<feature type="region of interest" description="Disordered" evidence="2">
    <location>
        <begin position="126"/>
        <end position="171"/>
    </location>
</feature>
<feature type="compositionally biased region" description="Basic and acidic residues" evidence="2">
    <location>
        <begin position="126"/>
        <end position="138"/>
    </location>
</feature>
<organism>
    <name type="scientific">Mycobacterium sp. (strain JLS)</name>
    <dbReference type="NCBI Taxonomy" id="164757"/>
    <lineage>
        <taxon>Bacteria</taxon>
        <taxon>Bacillati</taxon>
        <taxon>Actinomycetota</taxon>
        <taxon>Actinomycetes</taxon>
        <taxon>Mycobacteriales</taxon>
        <taxon>Mycobacteriaceae</taxon>
        <taxon>Mycobacterium</taxon>
    </lineage>
</organism>
<evidence type="ECO:0000255" key="1">
    <source>
        <dbReference type="HAMAP-Rule" id="MF_00003"/>
    </source>
</evidence>
<evidence type="ECO:0000256" key="2">
    <source>
        <dbReference type="SAM" id="MobiDB-lite"/>
    </source>
</evidence>
<name>RBFA_MYCSJ</name>
<reference key="1">
    <citation type="submission" date="2007-02" db="EMBL/GenBank/DDBJ databases">
        <title>Complete sequence of Mycobacterium sp. JLS.</title>
        <authorList>
            <consortium name="US DOE Joint Genome Institute"/>
            <person name="Copeland A."/>
            <person name="Lucas S."/>
            <person name="Lapidus A."/>
            <person name="Barry K."/>
            <person name="Detter J.C."/>
            <person name="Glavina del Rio T."/>
            <person name="Hammon N."/>
            <person name="Israni S."/>
            <person name="Dalin E."/>
            <person name="Tice H."/>
            <person name="Pitluck S."/>
            <person name="Chain P."/>
            <person name="Malfatti S."/>
            <person name="Shin M."/>
            <person name="Vergez L."/>
            <person name="Schmutz J."/>
            <person name="Larimer F."/>
            <person name="Land M."/>
            <person name="Hauser L."/>
            <person name="Kyrpides N."/>
            <person name="Mikhailova N."/>
            <person name="Miller C.D."/>
            <person name="Anderson A.J."/>
            <person name="Sims R.C."/>
            <person name="Richardson P."/>
        </authorList>
    </citation>
    <scope>NUCLEOTIDE SEQUENCE [LARGE SCALE GENOMIC DNA]</scope>
    <source>
        <strain>JLS</strain>
    </source>
</reference>
<sequence length="171" mass="18387">MADPARAKRLAKRISTIVASAIEYEIKDPRLAGVTITDSKVTNDLHDATLYYTVLGRSLDEEPDYAGAAAALEKAKGVLRTKVGAGTGVRFTPTLAFVRDTVPDTAHRMEELLARARAADEDLARVREGAKHAGDADPYRVSGVEEEAGGSGEVQAEFDAEDTGDRNRQDD</sequence>
<gene>
    <name evidence="1" type="primary">rbfA</name>
    <name type="ordered locus">Mjls_2066</name>
</gene>
<comment type="function">
    <text evidence="1">One of several proteins that assist in the late maturation steps of the functional core of the 30S ribosomal subunit. Associates with free 30S ribosomal subunits (but not with 30S subunits that are part of 70S ribosomes or polysomes). Required for efficient processing of 16S rRNA. May interact with the 5'-terminal helix region of 16S rRNA.</text>
</comment>
<comment type="subunit">
    <text evidence="1">Monomer. Binds 30S ribosomal subunits, but not 50S ribosomal subunits or 70S ribosomes.</text>
</comment>
<comment type="subcellular location">
    <subcellularLocation>
        <location evidence="1">Cytoplasm</location>
    </subcellularLocation>
</comment>
<comment type="similarity">
    <text evidence="1">Belongs to the RbfA family.</text>
</comment>
<protein>
    <recommendedName>
        <fullName evidence="1">Ribosome-binding factor A</fullName>
    </recommendedName>
</protein>
<accession>A3PY76</accession>
<proteinExistence type="inferred from homology"/>